<organism>
    <name type="scientific">Homo sapiens</name>
    <name type="common">Human</name>
    <dbReference type="NCBI Taxonomy" id="9606"/>
    <lineage>
        <taxon>Eukaryota</taxon>
        <taxon>Metazoa</taxon>
        <taxon>Chordata</taxon>
        <taxon>Craniata</taxon>
        <taxon>Vertebrata</taxon>
        <taxon>Euteleostomi</taxon>
        <taxon>Mammalia</taxon>
        <taxon>Eutheria</taxon>
        <taxon>Euarchontoglires</taxon>
        <taxon>Primates</taxon>
        <taxon>Haplorrhini</taxon>
        <taxon>Catarrhini</taxon>
        <taxon>Hominidae</taxon>
        <taxon>Homo</taxon>
    </lineage>
</organism>
<sequence>MSSPSPGKRRMDTDVVKLIESKHEVTILGGLNEFVVKFYGPQGTPYEGGVWKVRVDLPDKYPFKSPSIGFMNKIFHPNIDEASGTVCLDVINQTWTALYDLTNIFESFLPQLLAYPNPIDPLNGDAAAMYLHRPEEYKQKIKEYIQKYATEEALKEQEEGTGDSSSESSMSDFSEDEAQDMEL</sequence>
<proteinExistence type="evidence at protein level"/>
<comment type="function">
    <text evidence="5 6 8 9">Accepts ubiquitin from the E1 complex and catalyzes its covalent attachment to other proteins (PubMed:17588522, PubMed:20061386, PubMed:8132613). E2 ubiquitin conjugating enzyme that transfers ubiquitin to MAEA, a core component of the CTLH E3 ubiquitin-protein ligase complex (PubMed:29911972). In vitro catalyzes 'Lys-11'- and 'Lys-48'-linked polyubiquitination (PubMed:20061386). Capable, in vitro, to ubiquitinate histone H2A (PubMed:8132613).</text>
</comment>
<comment type="catalytic activity">
    <reaction evidence="2 3 5 6 7 8 9">
        <text>S-ubiquitinyl-[E1 ubiquitin-activating enzyme]-L-cysteine + [E2 ubiquitin-conjugating enzyme]-L-cysteine = [E1 ubiquitin-activating enzyme]-L-cysteine + S-ubiquitinyl-[E2 ubiquitin-conjugating enzyme]-L-cysteine.</text>
        <dbReference type="EC" id="2.3.2.23"/>
    </reaction>
</comment>
<comment type="catalytic activity">
    <reaction evidence="5 9">
        <text>S-ubiquitinyl-[E1 ubiquitin-activating enzyme]-L-cysteine + [acceptor protein]-L-lysine = [E1 ubiquitin-activating enzyme]-L-cysteine + N(6)-monoubiquitinyl-[acceptor protein]-L-lysine.</text>
        <dbReference type="EC" id="2.3.2.24"/>
    </reaction>
</comment>
<comment type="pathway">
    <text evidence="2 5 8 9">Protein modification; protein ubiquitination.</text>
</comment>
<comment type="subunit">
    <text evidence="8">Interacts with MAEA and WDR26, components of the CTLH complex that contains GID4, RANBP9 and/or RANBP10, MKLN1, MAEA, RMND5A (or alternatively its paralog RMND5B), GID8, ARMC8, WDR26 and YPEL5.</text>
</comment>
<comment type="interaction">
    <interactant intactId="EBI-2129909">
        <id>P62256</id>
    </interactant>
    <interactant intactId="EBI-356942">
        <id>P62879</id>
        <label>GNB2</label>
    </interactant>
    <organismsDiffer>false</organismsDiffer>
    <experiments>3</experiments>
</comment>
<comment type="interaction">
    <interactant intactId="EBI-2129909">
        <id>P62256</id>
    </interactant>
    <interactant intactId="EBI-466029">
        <id>P42858</id>
        <label>HTT</label>
    </interactant>
    <organismsDiffer>false</organismsDiffer>
    <experiments>3</experiments>
</comment>
<comment type="interaction">
    <interactant intactId="EBI-2129909">
        <id>P62256</id>
    </interactant>
    <interactant intactId="EBI-5650739">
        <id>P43356</id>
        <label>MAGEA2B</label>
    </interactant>
    <organismsDiffer>false</organismsDiffer>
    <experiments>2</experiments>
</comment>
<comment type="interaction">
    <interactant intactId="EBI-2129909">
        <id>P62256</id>
    </interactant>
    <interactant intactId="EBI-5651487">
        <id>Q9UBF1</id>
        <label>MAGEC2</label>
    </interactant>
    <organismsDiffer>false</organismsDiffer>
    <experiments>3</experiments>
</comment>
<comment type="alternative products">
    <event type="alternative splicing"/>
    <isoform>
        <id>P62256-1</id>
        <name>1</name>
        <sequence type="displayed"/>
    </isoform>
    <isoform>
        <id>P62256-2</id>
        <name>2</name>
        <sequence type="described" ref="VSP_044580"/>
    </isoform>
</comment>
<comment type="PTM">
    <text evidence="7">Autoubiquitinated in vitro in the presence of NEDD4L.</text>
</comment>
<comment type="similarity">
    <text evidence="2">Belongs to the ubiquitin-conjugating enzyme family.</text>
</comment>
<keyword id="KW-0002">3D-structure</keyword>
<keyword id="KW-0007">Acetylation</keyword>
<keyword id="KW-0025">Alternative splicing</keyword>
<keyword id="KW-0067">ATP-binding</keyword>
<keyword id="KW-0547">Nucleotide-binding</keyword>
<keyword id="KW-1267">Proteomics identification</keyword>
<keyword id="KW-1185">Reference proteome</keyword>
<keyword id="KW-0808">Transferase</keyword>
<keyword id="KW-0832">Ubl conjugation</keyword>
<keyword id="KW-0833">Ubl conjugation pathway</keyword>
<protein>
    <recommendedName>
        <fullName>Ubiquitin-conjugating enzyme E2 H</fullName>
        <ecNumber evidence="5 6 7 8 9">2.3.2.23</ecNumber>
    </recommendedName>
    <alternativeName>
        <fullName>(E3-independent) E2 ubiquitin-conjugating enzyme H</fullName>
        <ecNumber evidence="5 9">2.3.2.24</ecNumber>
    </alternativeName>
    <alternativeName>
        <fullName>E2 ubiquitin-conjugating enzyme H</fullName>
    </alternativeName>
    <alternativeName>
        <fullName>UbcH2</fullName>
    </alternativeName>
    <alternativeName>
        <fullName>Ubiquitin carrier protein H</fullName>
    </alternativeName>
    <alternativeName>
        <fullName>Ubiquitin-conjugating enzyme E2-20K</fullName>
    </alternativeName>
    <alternativeName>
        <fullName>Ubiquitin-protein ligase H</fullName>
    </alternativeName>
</protein>
<evidence type="ECO:0000250" key="1">
    <source>
        <dbReference type="UniProtKB" id="P62257"/>
    </source>
</evidence>
<evidence type="ECO:0000255" key="2">
    <source>
        <dbReference type="PROSITE-ProRule" id="PRU00388"/>
    </source>
</evidence>
<evidence type="ECO:0000255" key="3">
    <source>
        <dbReference type="PROSITE-ProRule" id="PRU10133"/>
    </source>
</evidence>
<evidence type="ECO:0000256" key="4">
    <source>
        <dbReference type="SAM" id="MobiDB-lite"/>
    </source>
</evidence>
<evidence type="ECO:0000269" key="5">
    <source>
    </source>
</evidence>
<evidence type="ECO:0000269" key="6">
    <source>
    </source>
</evidence>
<evidence type="ECO:0000269" key="7">
    <source>
    </source>
</evidence>
<evidence type="ECO:0000269" key="8">
    <source>
    </source>
</evidence>
<evidence type="ECO:0000269" key="9">
    <source>
    </source>
</evidence>
<evidence type="ECO:0000303" key="10">
    <source ref="2"/>
</evidence>
<evidence type="ECO:0000305" key="11"/>
<evidence type="ECO:0007744" key="12">
    <source>
        <dbReference type="PDB" id="2Z5D"/>
    </source>
</evidence>
<evidence type="ECO:0007829" key="13">
    <source>
        <dbReference type="PDB" id="2Z5D"/>
    </source>
</evidence>
<evidence type="ECO:0007829" key="14">
    <source>
        <dbReference type="PDB" id="8PJN"/>
    </source>
</evidence>
<dbReference type="EC" id="2.3.2.23" evidence="5 6 7 8 9"/>
<dbReference type="EC" id="2.3.2.24" evidence="5 9"/>
<dbReference type="EMBL" id="Z29328">
    <property type="protein sequence ID" value="CAA82525.1"/>
    <property type="molecule type" value="mRNA"/>
</dbReference>
<dbReference type="EMBL" id="Z29330">
    <property type="protein sequence ID" value="CAA82527.1"/>
    <property type="molecule type" value="mRNA"/>
</dbReference>
<dbReference type="EMBL" id="Z29331">
    <property type="protein sequence ID" value="CAA82528.1"/>
    <property type="molecule type" value="mRNA"/>
</dbReference>
<dbReference type="EMBL" id="AY302138">
    <property type="protein sequence ID" value="AAP57630.1"/>
    <property type="molecule type" value="mRNA"/>
</dbReference>
<dbReference type="EMBL" id="BT006756">
    <property type="protein sequence ID" value="AAP35402.1"/>
    <property type="molecule type" value="mRNA"/>
</dbReference>
<dbReference type="EMBL" id="AC073320">
    <property type="status" value="NOT_ANNOTATED_CDS"/>
    <property type="molecule type" value="Genomic_DNA"/>
</dbReference>
<dbReference type="EMBL" id="AC084865">
    <property type="status" value="NOT_ANNOTATED_CDS"/>
    <property type="molecule type" value="Genomic_DNA"/>
</dbReference>
<dbReference type="EMBL" id="CH236950">
    <property type="protein sequence ID" value="EAL24099.1"/>
    <property type="molecule type" value="Genomic_DNA"/>
</dbReference>
<dbReference type="EMBL" id="CH471070">
    <property type="protein sequence ID" value="EAW83736.1"/>
    <property type="molecule type" value="Genomic_DNA"/>
</dbReference>
<dbReference type="EMBL" id="BC006277">
    <property type="protein sequence ID" value="AAH06277.1"/>
    <property type="molecule type" value="mRNA"/>
</dbReference>
<dbReference type="CCDS" id="CCDS47710.1">
    <molecule id="P62256-2"/>
</dbReference>
<dbReference type="CCDS" id="CCDS5814.1">
    <molecule id="P62256-1"/>
</dbReference>
<dbReference type="PIR" id="A53516">
    <property type="entry name" value="A53516"/>
</dbReference>
<dbReference type="RefSeq" id="NP_001189427.1">
    <property type="nucleotide sequence ID" value="NM_001202498.1"/>
</dbReference>
<dbReference type="RefSeq" id="NP_003335.1">
    <molecule id="P62256-1"/>
    <property type="nucleotide sequence ID" value="NM_003344.4"/>
</dbReference>
<dbReference type="RefSeq" id="NP_874356.1">
    <molecule id="P62256-2"/>
    <property type="nucleotide sequence ID" value="NM_182697.3"/>
</dbReference>
<dbReference type="PDB" id="2Z5D">
    <property type="method" value="X-ray"/>
    <property type="resolution" value="2.10 A"/>
    <property type="chains" value="A/B=1-160"/>
</dbReference>
<dbReference type="PDB" id="8PJN">
    <property type="method" value="EM"/>
    <property type="resolution" value="3.40 A"/>
    <property type="chains" value="2=1-183"/>
</dbReference>
<dbReference type="PDBsum" id="2Z5D"/>
<dbReference type="PDBsum" id="8PJN"/>
<dbReference type="EMDB" id="EMD-17713"/>
<dbReference type="SMR" id="P62256"/>
<dbReference type="BioGRID" id="113176">
    <property type="interactions" value="1970"/>
</dbReference>
<dbReference type="FunCoup" id="P62256">
    <property type="interactions" value="4237"/>
</dbReference>
<dbReference type="IntAct" id="P62256">
    <property type="interactions" value="55"/>
</dbReference>
<dbReference type="STRING" id="9606.ENSP00000347836"/>
<dbReference type="ChEMBL" id="CHEMBL4105951"/>
<dbReference type="MoonDB" id="P62256">
    <property type="type" value="Predicted"/>
</dbReference>
<dbReference type="iPTMnet" id="P62256"/>
<dbReference type="MetOSite" id="P62256"/>
<dbReference type="PhosphoSitePlus" id="P62256"/>
<dbReference type="SwissPalm" id="P62256"/>
<dbReference type="BioMuta" id="UBE2H"/>
<dbReference type="DMDM" id="51338683"/>
<dbReference type="jPOST" id="P62256"/>
<dbReference type="MassIVE" id="P62256"/>
<dbReference type="PaxDb" id="9606-ENSP00000347836"/>
<dbReference type="PeptideAtlas" id="P62256"/>
<dbReference type="ProteomicsDB" id="57376">
    <molecule id="P62256-1"/>
</dbReference>
<dbReference type="ProteomicsDB" id="621"/>
<dbReference type="Pumba" id="P62256"/>
<dbReference type="Antibodypedia" id="1149">
    <property type="antibodies" value="206 antibodies from 29 providers"/>
</dbReference>
<dbReference type="DNASU" id="7328"/>
<dbReference type="Ensembl" id="ENST00000355621.8">
    <molecule id="P62256-1"/>
    <property type="protein sequence ID" value="ENSP00000347836.3"/>
    <property type="gene ID" value="ENSG00000186591.13"/>
</dbReference>
<dbReference type="Ensembl" id="ENST00000473814.6">
    <molecule id="P62256-2"/>
    <property type="protein sequence ID" value="ENSP00000419097.2"/>
    <property type="gene ID" value="ENSG00000186591.13"/>
</dbReference>
<dbReference type="GeneID" id="7328"/>
<dbReference type="KEGG" id="hsa:7328"/>
<dbReference type="MANE-Select" id="ENST00000355621.8">
    <property type="protein sequence ID" value="ENSP00000347836.3"/>
    <property type="RefSeq nucleotide sequence ID" value="NM_003344.4"/>
    <property type="RefSeq protein sequence ID" value="NP_003335.1"/>
</dbReference>
<dbReference type="UCSC" id="uc003vpf.3">
    <molecule id="P62256-1"/>
    <property type="organism name" value="human"/>
</dbReference>
<dbReference type="AGR" id="HGNC:12484"/>
<dbReference type="CTD" id="7328"/>
<dbReference type="DisGeNET" id="7328"/>
<dbReference type="GeneCards" id="UBE2H"/>
<dbReference type="HGNC" id="HGNC:12484">
    <property type="gene designation" value="UBE2H"/>
</dbReference>
<dbReference type="HPA" id="ENSG00000186591">
    <property type="expression patterns" value="Low tissue specificity"/>
</dbReference>
<dbReference type="MIM" id="601082">
    <property type="type" value="gene"/>
</dbReference>
<dbReference type="neXtProt" id="NX_P62256"/>
<dbReference type="OpenTargets" id="ENSG00000186591"/>
<dbReference type="PharmGKB" id="PA37133"/>
<dbReference type="VEuPathDB" id="HostDB:ENSG00000186591"/>
<dbReference type="eggNOG" id="KOG0416">
    <property type="taxonomic scope" value="Eukaryota"/>
</dbReference>
<dbReference type="GeneTree" id="ENSGT00390000004852"/>
<dbReference type="InParanoid" id="P62256"/>
<dbReference type="OMA" id="KFYVRFK"/>
<dbReference type="OrthoDB" id="9528824at2759"/>
<dbReference type="PAN-GO" id="P62256">
    <property type="GO annotations" value="4 GO annotations based on evolutionary models"/>
</dbReference>
<dbReference type="PhylomeDB" id="P62256"/>
<dbReference type="TreeFam" id="TF101121"/>
<dbReference type="BRENDA" id="2.3.2.23">
    <property type="organism ID" value="2681"/>
</dbReference>
<dbReference type="BRENDA" id="2.3.2.24">
    <property type="organism ID" value="2681"/>
</dbReference>
<dbReference type="PathwayCommons" id="P62256"/>
<dbReference type="Reactome" id="R-HSA-8866652">
    <property type="pathway name" value="Synthesis of active ubiquitin: roles of E1 and E2 enzymes"/>
</dbReference>
<dbReference type="Reactome" id="R-HSA-983168">
    <property type="pathway name" value="Antigen processing: Ubiquitination &amp; Proteasome degradation"/>
</dbReference>
<dbReference type="SignaLink" id="P62256"/>
<dbReference type="SIGNOR" id="P62256"/>
<dbReference type="UniPathway" id="UPA00143"/>
<dbReference type="BioGRID-ORCS" id="7328">
    <property type="hits" value="351 hits in 1173 CRISPR screens"/>
</dbReference>
<dbReference type="ChiTaRS" id="UBE2H">
    <property type="organism name" value="human"/>
</dbReference>
<dbReference type="EvolutionaryTrace" id="P62256"/>
<dbReference type="GeneWiki" id="UBE2H"/>
<dbReference type="GenomeRNAi" id="7328"/>
<dbReference type="Pharos" id="P62256">
    <property type="development level" value="Tbio"/>
</dbReference>
<dbReference type="PRO" id="PR:P62256"/>
<dbReference type="Proteomes" id="UP000005640">
    <property type="component" value="Chromosome 7"/>
</dbReference>
<dbReference type="RNAct" id="P62256">
    <property type="molecule type" value="protein"/>
</dbReference>
<dbReference type="Bgee" id="ENSG00000186591">
    <property type="expression patterns" value="Expressed in secondary oocyte and 199 other cell types or tissues"/>
</dbReference>
<dbReference type="ExpressionAtlas" id="P62256">
    <property type="expression patterns" value="baseline and differential"/>
</dbReference>
<dbReference type="GO" id="GO:0005829">
    <property type="term" value="C:cytosol"/>
    <property type="evidence" value="ECO:0000304"/>
    <property type="project" value="Reactome"/>
</dbReference>
<dbReference type="GO" id="GO:0005634">
    <property type="term" value="C:nucleus"/>
    <property type="evidence" value="ECO:0000318"/>
    <property type="project" value="GO_Central"/>
</dbReference>
<dbReference type="GO" id="GO:0005524">
    <property type="term" value="F:ATP binding"/>
    <property type="evidence" value="ECO:0007669"/>
    <property type="project" value="UniProtKB-KW"/>
</dbReference>
<dbReference type="GO" id="GO:0061631">
    <property type="term" value="F:ubiquitin conjugating enzyme activity"/>
    <property type="evidence" value="ECO:0000318"/>
    <property type="project" value="GO_Central"/>
</dbReference>
<dbReference type="GO" id="GO:0004842">
    <property type="term" value="F:ubiquitin-protein transferase activity"/>
    <property type="evidence" value="ECO:0000314"/>
    <property type="project" value="UniProtKB"/>
</dbReference>
<dbReference type="GO" id="GO:0043161">
    <property type="term" value="P:proteasome-mediated ubiquitin-dependent protein catabolic process"/>
    <property type="evidence" value="ECO:0007669"/>
    <property type="project" value="Ensembl"/>
</dbReference>
<dbReference type="GO" id="GO:0070979">
    <property type="term" value="P:protein K11-linked ubiquitination"/>
    <property type="evidence" value="ECO:0000314"/>
    <property type="project" value="UniProtKB"/>
</dbReference>
<dbReference type="GO" id="GO:0070936">
    <property type="term" value="P:protein K48-linked ubiquitination"/>
    <property type="evidence" value="ECO:0000314"/>
    <property type="project" value="UniProtKB"/>
</dbReference>
<dbReference type="GO" id="GO:0000209">
    <property type="term" value="P:protein polyubiquitination"/>
    <property type="evidence" value="ECO:0000318"/>
    <property type="project" value="GO_Central"/>
</dbReference>
<dbReference type="GO" id="GO:0006511">
    <property type="term" value="P:ubiquitin-dependent protein catabolic process"/>
    <property type="evidence" value="ECO:0000318"/>
    <property type="project" value="GO_Central"/>
</dbReference>
<dbReference type="CDD" id="cd23797">
    <property type="entry name" value="UBCc_UBE2H"/>
    <property type="match status" value="1"/>
</dbReference>
<dbReference type="FunFam" id="3.10.110.10:FF:000078">
    <property type="entry name" value="ubiquitin-conjugating enzyme E2 H isoform X2"/>
    <property type="match status" value="1"/>
</dbReference>
<dbReference type="Gene3D" id="3.10.110.10">
    <property type="entry name" value="Ubiquitin Conjugating Enzyme"/>
    <property type="match status" value="1"/>
</dbReference>
<dbReference type="IDEAL" id="IID00637"/>
<dbReference type="InterPro" id="IPR000608">
    <property type="entry name" value="UBQ-conjugat_E2_core"/>
</dbReference>
<dbReference type="InterPro" id="IPR023313">
    <property type="entry name" value="UBQ-conjugating_AS"/>
</dbReference>
<dbReference type="InterPro" id="IPR016135">
    <property type="entry name" value="UBQ-conjugating_enzyme/RWD"/>
</dbReference>
<dbReference type="PANTHER" id="PTHR24068">
    <property type="entry name" value="UBIQUITIN-CONJUGATING ENZYME E2"/>
    <property type="match status" value="1"/>
</dbReference>
<dbReference type="Pfam" id="PF00179">
    <property type="entry name" value="UQ_con"/>
    <property type="match status" value="1"/>
</dbReference>
<dbReference type="SMART" id="SM00212">
    <property type="entry name" value="UBCc"/>
    <property type="match status" value="1"/>
</dbReference>
<dbReference type="SUPFAM" id="SSF54495">
    <property type="entry name" value="UBC-like"/>
    <property type="match status" value="1"/>
</dbReference>
<dbReference type="PROSITE" id="PS00183">
    <property type="entry name" value="UBC_1"/>
    <property type="match status" value="1"/>
</dbReference>
<dbReference type="PROSITE" id="PS50127">
    <property type="entry name" value="UBC_2"/>
    <property type="match status" value="1"/>
</dbReference>
<name>UBE2H_HUMAN</name>
<accession>P62256</accession>
<accession>A4D1L6</accession>
<accession>C9JY93</accession>
<accession>P37286</accession>
<accession>Q7Z6F4</accession>
<feature type="chain" id="PRO_0000082486" description="Ubiquitin-conjugating enzyme E2 H">
    <location>
        <begin position="1"/>
        <end position="183"/>
    </location>
</feature>
<feature type="domain" description="UBC core" evidence="2">
    <location>
        <begin position="1"/>
        <end position="150"/>
    </location>
</feature>
<feature type="region of interest" description="Disordered" evidence="4">
    <location>
        <begin position="152"/>
        <end position="183"/>
    </location>
</feature>
<feature type="compositionally biased region" description="Low complexity" evidence="4">
    <location>
        <begin position="163"/>
        <end position="172"/>
    </location>
</feature>
<feature type="compositionally biased region" description="Acidic residues" evidence="4">
    <location>
        <begin position="173"/>
        <end position="183"/>
    </location>
</feature>
<feature type="active site" description="Glycyl thioester intermediate" evidence="2 3">
    <location>
        <position position="87"/>
    </location>
</feature>
<feature type="modified residue" description="N6-acetyllysine" evidence="1">
    <location>
        <position position="60"/>
    </location>
</feature>
<feature type="splice variant" id="VSP_044580" description="In isoform 2." evidence="10">
    <location>
        <begin position="69"/>
        <end position="99"/>
    </location>
</feature>
<feature type="sequence conflict" description="In Ref. 2; AAP57630." evidence="11" ref="2">
    <original>S</original>
    <variation>P</variation>
    <location>
        <position position="165"/>
    </location>
</feature>
<feature type="helix" evidence="13">
    <location>
        <begin position="6"/>
        <end position="20"/>
    </location>
</feature>
<feature type="strand" evidence="13">
    <location>
        <begin position="21"/>
        <end position="23"/>
    </location>
</feature>
<feature type="strand" evidence="13">
    <location>
        <begin position="25"/>
        <end position="30"/>
    </location>
</feature>
<feature type="strand" evidence="13">
    <location>
        <begin position="33"/>
        <end position="39"/>
    </location>
</feature>
<feature type="strand" evidence="14">
    <location>
        <begin position="42"/>
        <end position="44"/>
    </location>
</feature>
<feature type="turn" evidence="13">
    <location>
        <begin position="45"/>
        <end position="48"/>
    </location>
</feature>
<feature type="strand" evidence="13">
    <location>
        <begin position="50"/>
        <end position="56"/>
    </location>
</feature>
<feature type="turn" evidence="13">
    <location>
        <begin position="59"/>
        <end position="63"/>
    </location>
</feature>
<feature type="strand" evidence="13">
    <location>
        <begin position="67"/>
        <end position="72"/>
    </location>
</feature>
<feature type="turn" evidence="13">
    <location>
        <begin position="81"/>
        <end position="83"/>
    </location>
</feature>
<feature type="helix" evidence="13">
    <location>
        <begin position="88"/>
        <end position="94"/>
    </location>
</feature>
<feature type="helix" evidence="13">
    <location>
        <begin position="103"/>
        <end position="106"/>
    </location>
</feature>
<feature type="helix" evidence="13">
    <location>
        <begin position="108"/>
        <end position="114"/>
    </location>
</feature>
<feature type="helix" evidence="13">
    <location>
        <begin position="124"/>
        <end position="132"/>
    </location>
</feature>
<feature type="helix" evidence="13">
    <location>
        <begin position="134"/>
        <end position="148"/>
    </location>
</feature>
<feature type="helix" evidence="13">
    <location>
        <begin position="151"/>
        <end position="154"/>
    </location>
</feature>
<gene>
    <name type="primary">UBE2H</name>
</gene>
<reference key="1">
    <citation type="journal article" date="1994" name="J. Biol. Chem.">
        <title>A human ubiquitin-conjugating enzyme homologous to yeast UBC8.</title>
        <authorList>
            <person name="Kaiser P."/>
            <person name="Seufert W."/>
            <person name="Hoefferer L."/>
            <person name="Kofler B."/>
            <person name="Sachsenmaier C."/>
            <person name="Herzog H."/>
            <person name="Jentsch S."/>
            <person name="Schweiger M."/>
            <person name="Schneider R."/>
        </authorList>
    </citation>
    <scope>NUCLEOTIDE SEQUENCE [MRNA] (ISOFORM 1)</scope>
    <scope>FUNCTION</scope>
    <scope>CATALYTIC ACTIVITY</scope>
    <scope>PATHWAY</scope>
</reference>
<reference key="2">
    <citation type="submission" date="2003-05" db="EMBL/GenBank/DDBJ databases">
        <authorList>
            <person name="Lin L."/>
            <person name="Li S."/>
            <person name="Li H."/>
            <person name="Zhou G."/>
            <person name="Shen C."/>
            <person name="Zheng G."/>
            <person name="Ke R."/>
            <person name="Zhong G."/>
            <person name="Yu R."/>
            <person name="Yang S."/>
        </authorList>
    </citation>
    <scope>NUCLEOTIDE SEQUENCE [MRNA] (ISOFORM 2)</scope>
</reference>
<reference key="3">
    <citation type="submission" date="2003-05" db="EMBL/GenBank/DDBJ databases">
        <title>Cloning of human full-length CDSs in BD Creator(TM) system donor vector.</title>
        <authorList>
            <person name="Kalnine N."/>
            <person name="Chen X."/>
            <person name="Rolfs A."/>
            <person name="Halleck A."/>
            <person name="Hines L."/>
            <person name="Eisenstein S."/>
            <person name="Koundinya M."/>
            <person name="Raphael J."/>
            <person name="Moreira D."/>
            <person name="Kelley T."/>
            <person name="LaBaer J."/>
            <person name="Lin Y."/>
            <person name="Phelan M."/>
            <person name="Farmer A."/>
        </authorList>
    </citation>
    <scope>NUCLEOTIDE SEQUENCE [LARGE SCALE MRNA] (ISOFORM 1)</scope>
</reference>
<reference key="4">
    <citation type="journal article" date="2003" name="Nature">
        <title>The DNA sequence of human chromosome 7.</title>
        <authorList>
            <person name="Hillier L.W."/>
            <person name="Fulton R.S."/>
            <person name="Fulton L.A."/>
            <person name="Graves T.A."/>
            <person name="Pepin K.H."/>
            <person name="Wagner-McPherson C."/>
            <person name="Layman D."/>
            <person name="Maas J."/>
            <person name="Jaeger S."/>
            <person name="Walker R."/>
            <person name="Wylie K."/>
            <person name="Sekhon M."/>
            <person name="Becker M.C."/>
            <person name="O'Laughlin M.D."/>
            <person name="Schaller M.E."/>
            <person name="Fewell G.A."/>
            <person name="Delehaunty K.D."/>
            <person name="Miner T.L."/>
            <person name="Nash W.E."/>
            <person name="Cordes M."/>
            <person name="Du H."/>
            <person name="Sun H."/>
            <person name="Edwards J."/>
            <person name="Bradshaw-Cordum H."/>
            <person name="Ali J."/>
            <person name="Andrews S."/>
            <person name="Isak A."/>
            <person name="Vanbrunt A."/>
            <person name="Nguyen C."/>
            <person name="Du F."/>
            <person name="Lamar B."/>
            <person name="Courtney L."/>
            <person name="Kalicki J."/>
            <person name="Ozersky P."/>
            <person name="Bielicki L."/>
            <person name="Scott K."/>
            <person name="Holmes A."/>
            <person name="Harkins R."/>
            <person name="Harris A."/>
            <person name="Strong C.M."/>
            <person name="Hou S."/>
            <person name="Tomlinson C."/>
            <person name="Dauphin-Kohlberg S."/>
            <person name="Kozlowicz-Reilly A."/>
            <person name="Leonard S."/>
            <person name="Rohlfing T."/>
            <person name="Rock S.M."/>
            <person name="Tin-Wollam A.-M."/>
            <person name="Abbott A."/>
            <person name="Minx P."/>
            <person name="Maupin R."/>
            <person name="Strowmatt C."/>
            <person name="Latreille P."/>
            <person name="Miller N."/>
            <person name="Johnson D."/>
            <person name="Murray J."/>
            <person name="Woessner J.P."/>
            <person name="Wendl M.C."/>
            <person name="Yang S.-P."/>
            <person name="Schultz B.R."/>
            <person name="Wallis J.W."/>
            <person name="Spieth J."/>
            <person name="Bieri T.A."/>
            <person name="Nelson J.O."/>
            <person name="Berkowicz N."/>
            <person name="Wohldmann P.E."/>
            <person name="Cook L.L."/>
            <person name="Hickenbotham M.T."/>
            <person name="Eldred J."/>
            <person name="Williams D."/>
            <person name="Bedell J.A."/>
            <person name="Mardis E.R."/>
            <person name="Clifton S.W."/>
            <person name="Chissoe S.L."/>
            <person name="Marra M.A."/>
            <person name="Raymond C."/>
            <person name="Haugen E."/>
            <person name="Gillett W."/>
            <person name="Zhou Y."/>
            <person name="James R."/>
            <person name="Phelps K."/>
            <person name="Iadanoto S."/>
            <person name="Bubb K."/>
            <person name="Simms E."/>
            <person name="Levy R."/>
            <person name="Clendenning J."/>
            <person name="Kaul R."/>
            <person name="Kent W.J."/>
            <person name="Furey T.S."/>
            <person name="Baertsch R.A."/>
            <person name="Brent M.R."/>
            <person name="Keibler E."/>
            <person name="Flicek P."/>
            <person name="Bork P."/>
            <person name="Suyama M."/>
            <person name="Bailey J.A."/>
            <person name="Portnoy M.E."/>
            <person name="Torrents D."/>
            <person name="Chinwalla A.T."/>
            <person name="Gish W.R."/>
            <person name="Eddy S.R."/>
            <person name="McPherson J.D."/>
            <person name="Olson M.V."/>
            <person name="Eichler E.E."/>
            <person name="Green E.D."/>
            <person name="Waterston R.H."/>
            <person name="Wilson R.K."/>
        </authorList>
    </citation>
    <scope>NUCLEOTIDE SEQUENCE [LARGE SCALE GENOMIC DNA]</scope>
</reference>
<reference key="5">
    <citation type="journal article" date="2003" name="Science">
        <title>Human chromosome 7: DNA sequence and biology.</title>
        <authorList>
            <person name="Scherer S.W."/>
            <person name="Cheung J."/>
            <person name="MacDonald J.R."/>
            <person name="Osborne L.R."/>
            <person name="Nakabayashi K."/>
            <person name="Herbrick J.-A."/>
            <person name="Carson A.R."/>
            <person name="Parker-Katiraee L."/>
            <person name="Skaug J."/>
            <person name="Khaja R."/>
            <person name="Zhang J."/>
            <person name="Hudek A.K."/>
            <person name="Li M."/>
            <person name="Haddad M."/>
            <person name="Duggan G.E."/>
            <person name="Fernandez B.A."/>
            <person name="Kanematsu E."/>
            <person name="Gentles S."/>
            <person name="Christopoulos C.C."/>
            <person name="Choufani S."/>
            <person name="Kwasnicka D."/>
            <person name="Zheng X.H."/>
            <person name="Lai Z."/>
            <person name="Nusskern D.R."/>
            <person name="Zhang Q."/>
            <person name="Gu Z."/>
            <person name="Lu F."/>
            <person name="Zeesman S."/>
            <person name="Nowaczyk M.J."/>
            <person name="Teshima I."/>
            <person name="Chitayat D."/>
            <person name="Shuman C."/>
            <person name="Weksberg R."/>
            <person name="Zackai E.H."/>
            <person name="Grebe T.A."/>
            <person name="Cox S.R."/>
            <person name="Kirkpatrick S.J."/>
            <person name="Rahman N."/>
            <person name="Friedman J.M."/>
            <person name="Heng H.H.Q."/>
            <person name="Pelicci P.G."/>
            <person name="Lo-Coco F."/>
            <person name="Belloni E."/>
            <person name="Shaffer L.G."/>
            <person name="Pober B."/>
            <person name="Morton C.C."/>
            <person name="Gusella J.F."/>
            <person name="Bruns G.A.P."/>
            <person name="Korf B.R."/>
            <person name="Quade B.J."/>
            <person name="Ligon A.H."/>
            <person name="Ferguson H."/>
            <person name="Higgins A.W."/>
            <person name="Leach N.T."/>
            <person name="Herrick S.R."/>
            <person name="Lemyre E."/>
            <person name="Farra C.G."/>
            <person name="Kim H.-G."/>
            <person name="Summers A.M."/>
            <person name="Gripp K.W."/>
            <person name="Roberts W."/>
            <person name="Szatmari P."/>
            <person name="Winsor E.J.T."/>
            <person name="Grzeschik K.-H."/>
            <person name="Teebi A."/>
            <person name="Minassian B.A."/>
            <person name="Kere J."/>
            <person name="Armengol L."/>
            <person name="Pujana M.A."/>
            <person name="Estivill X."/>
            <person name="Wilson M.D."/>
            <person name="Koop B.F."/>
            <person name="Tosi S."/>
            <person name="Moore G.E."/>
            <person name="Boright A.P."/>
            <person name="Zlotorynski E."/>
            <person name="Kerem B."/>
            <person name="Kroisel P.M."/>
            <person name="Petek E."/>
            <person name="Oscier D.G."/>
            <person name="Mould S.J."/>
            <person name="Doehner H."/>
            <person name="Doehner K."/>
            <person name="Rommens J.M."/>
            <person name="Vincent J.B."/>
            <person name="Venter J.C."/>
            <person name="Li P.W."/>
            <person name="Mural R.J."/>
            <person name="Adams M.D."/>
            <person name="Tsui L.-C."/>
        </authorList>
    </citation>
    <scope>NUCLEOTIDE SEQUENCE [LARGE SCALE GENOMIC DNA]</scope>
</reference>
<reference key="6">
    <citation type="submission" date="2005-07" db="EMBL/GenBank/DDBJ databases">
        <authorList>
            <person name="Mural R.J."/>
            <person name="Istrail S."/>
            <person name="Sutton G."/>
            <person name="Florea L."/>
            <person name="Halpern A.L."/>
            <person name="Mobarry C.M."/>
            <person name="Lippert R."/>
            <person name="Walenz B."/>
            <person name="Shatkay H."/>
            <person name="Dew I."/>
            <person name="Miller J.R."/>
            <person name="Flanigan M.J."/>
            <person name="Edwards N.J."/>
            <person name="Bolanos R."/>
            <person name="Fasulo D."/>
            <person name="Halldorsson B.V."/>
            <person name="Hannenhalli S."/>
            <person name="Turner R."/>
            <person name="Yooseph S."/>
            <person name="Lu F."/>
            <person name="Nusskern D.R."/>
            <person name="Shue B.C."/>
            <person name="Zheng X.H."/>
            <person name="Zhong F."/>
            <person name="Delcher A.L."/>
            <person name="Huson D.H."/>
            <person name="Kravitz S.A."/>
            <person name="Mouchard L."/>
            <person name="Reinert K."/>
            <person name="Remington K.A."/>
            <person name="Clark A.G."/>
            <person name="Waterman M.S."/>
            <person name="Eichler E.E."/>
            <person name="Adams M.D."/>
            <person name="Hunkapiller M.W."/>
            <person name="Myers E.W."/>
            <person name="Venter J.C."/>
        </authorList>
    </citation>
    <scope>NUCLEOTIDE SEQUENCE [LARGE SCALE GENOMIC DNA]</scope>
</reference>
<reference key="7">
    <citation type="journal article" date="2004" name="Genome Res.">
        <title>The status, quality, and expansion of the NIH full-length cDNA project: the Mammalian Gene Collection (MGC).</title>
        <authorList>
            <consortium name="The MGC Project Team"/>
        </authorList>
    </citation>
    <scope>NUCLEOTIDE SEQUENCE [LARGE SCALE MRNA] (ISOFORM 1)</scope>
    <source>
        <tissue>Placenta</tissue>
    </source>
</reference>
<reference key="8">
    <citation type="journal article" date="2007" name="Mol. Cell">
        <title>E3-independent monoubiquitination of ubiquitin-binding proteins.</title>
        <authorList>
            <person name="Hoeller D."/>
            <person name="Hecker C.M."/>
            <person name="Wagner S."/>
            <person name="Rogov V."/>
            <person name="Doetsch V."/>
            <person name="Dikic I."/>
        </authorList>
    </citation>
    <scope>FUNCTION</scope>
    <scope>CATALYTIC ACTIVITY AS E3-INDEPENDENT E2 UBIQUITIN-CONJUGATING ENZYME</scope>
    <scope>PATHWAY</scope>
</reference>
<reference key="9">
    <citation type="journal article" date="2010" name="J. Biol. Chem.">
        <title>The E2 ubiquitin-conjugating enzymes direct polyubiquitination to preferred lysines.</title>
        <authorList>
            <person name="David Y."/>
            <person name="Ziv T."/>
            <person name="Admon A."/>
            <person name="Navon A."/>
        </authorList>
    </citation>
    <scope>FUNCTION</scope>
    <scope>CATALYTIC ACTIVITY</scope>
</reference>
<reference key="10">
    <citation type="journal article" date="2011" name="BMC Syst. Biol.">
        <title>Initial characterization of the human central proteome.</title>
        <authorList>
            <person name="Burkard T.R."/>
            <person name="Planyavsky M."/>
            <person name="Kaupe I."/>
            <person name="Breitwieser F.P."/>
            <person name="Buerckstuemmer T."/>
            <person name="Bennett K.L."/>
            <person name="Superti-Furga G."/>
            <person name="Colinge J."/>
        </authorList>
    </citation>
    <scope>IDENTIFICATION BY MASS SPECTROMETRY [LARGE SCALE ANALYSIS]</scope>
</reference>
<reference key="11">
    <citation type="journal article" date="2018" name="Elife">
        <title>The multi-subunit GID/CTLH E3 ligase promotes proliferation and targets the transcription factor Hbp1 for degradation.</title>
        <authorList>
            <person name="Lampert F."/>
            <person name="Stafa D."/>
            <person name="Goga A."/>
            <person name="Soste M.V."/>
            <person name="Gilberto S."/>
            <person name="Olieric N."/>
            <person name="Picotti P."/>
            <person name="Stoffel M."/>
            <person name="Peter M."/>
        </authorList>
    </citation>
    <scope>FUNCTION</scope>
    <scope>CATALYTIC ACTIVITY</scope>
    <scope>PATHWAY</scope>
    <scope>IDENTIFICATION IN THE CTLH COMPLEX</scope>
    <scope>INTERACTION WITH WDR26 AND ARMC8</scope>
</reference>
<reference evidence="12" key="12">
    <citation type="journal article" date="2012" name="Mol. Cell. Proteomics">
        <title>A human ubiquitin conjugating enzyme (E2)-HECT E3 ligase structure-function screen.</title>
        <authorList>
            <person name="Sheng Y."/>
            <person name="Hong J.H."/>
            <person name="Doherty R."/>
            <person name="Srikumar T."/>
            <person name="Shloush J."/>
            <person name="Avvakumov G.V."/>
            <person name="Walker J.R."/>
            <person name="Xue S."/>
            <person name="Neculai D."/>
            <person name="Wan J.W."/>
            <person name="Kim S.K."/>
            <person name="Arrowsmith C.H."/>
            <person name="Raught B."/>
            <person name="Dhe-Paganon S."/>
        </authorList>
    </citation>
    <scope>X-RAY CRYSTALLOGRAPHY (2.10 ANGSTROMS) OF 1-160</scope>
    <scope>CATALYTIC ACTIVITY</scope>
    <scope>AUTOUBIQUITINATION</scope>
</reference>